<protein>
    <recommendedName>
        <fullName evidence="1">Regulator of ribonuclease activity A</fullName>
    </recommendedName>
</protein>
<keyword id="KW-0963">Cytoplasm</keyword>
<keyword id="KW-1185">Reference proteome</keyword>
<reference key="1">
    <citation type="journal article" date="2009" name="PLoS Genet.">
        <title>Organised genome dynamics in the Escherichia coli species results in highly diverse adaptive paths.</title>
        <authorList>
            <person name="Touchon M."/>
            <person name="Hoede C."/>
            <person name="Tenaillon O."/>
            <person name="Barbe V."/>
            <person name="Baeriswyl S."/>
            <person name="Bidet P."/>
            <person name="Bingen E."/>
            <person name="Bonacorsi S."/>
            <person name="Bouchier C."/>
            <person name="Bouvet O."/>
            <person name="Calteau A."/>
            <person name="Chiapello H."/>
            <person name="Clermont O."/>
            <person name="Cruveiller S."/>
            <person name="Danchin A."/>
            <person name="Diard M."/>
            <person name="Dossat C."/>
            <person name="Karoui M.E."/>
            <person name="Frapy E."/>
            <person name="Garry L."/>
            <person name="Ghigo J.M."/>
            <person name="Gilles A.M."/>
            <person name="Johnson J."/>
            <person name="Le Bouguenec C."/>
            <person name="Lescat M."/>
            <person name="Mangenot S."/>
            <person name="Martinez-Jehanne V."/>
            <person name="Matic I."/>
            <person name="Nassif X."/>
            <person name="Oztas S."/>
            <person name="Petit M.A."/>
            <person name="Pichon C."/>
            <person name="Rouy Z."/>
            <person name="Ruf C.S."/>
            <person name="Schneider D."/>
            <person name="Tourret J."/>
            <person name="Vacherie B."/>
            <person name="Vallenet D."/>
            <person name="Medigue C."/>
            <person name="Rocha E.P.C."/>
            <person name="Denamur E."/>
        </authorList>
    </citation>
    <scope>NUCLEOTIDE SEQUENCE [LARGE SCALE GENOMIC DNA]</scope>
    <source>
        <strain>S88 / ExPEC</strain>
    </source>
</reference>
<accession>B7MI61</accession>
<sequence length="161" mass="17360">MKYDTSELCDIYQEDVNVVEPLFSNFGGRASFGGQIITVKCFEDNGLLYDLLEQNGRGRVLVVDGGGSVRRALVDAELARLAVQNEWEGLVIYGAVRQVDDLEELDIGIQAMAAIPVGAAGEGIGESDVRVNFGGVTFFSGDHLYADNTGIILSEDPLDIE</sequence>
<name>RRAA_ECO45</name>
<dbReference type="EMBL" id="CU928161">
    <property type="protein sequence ID" value="CAR05559.1"/>
    <property type="molecule type" value="Genomic_DNA"/>
</dbReference>
<dbReference type="RefSeq" id="WP_000872908.1">
    <property type="nucleotide sequence ID" value="NC_011742.1"/>
</dbReference>
<dbReference type="SMR" id="B7MI61"/>
<dbReference type="GeneID" id="93777969"/>
<dbReference type="KEGG" id="ecz:ECS88_4379"/>
<dbReference type="HOGENOM" id="CLU_072626_4_0_6"/>
<dbReference type="Proteomes" id="UP000000747">
    <property type="component" value="Chromosome"/>
</dbReference>
<dbReference type="GO" id="GO:0005829">
    <property type="term" value="C:cytosol"/>
    <property type="evidence" value="ECO:0007669"/>
    <property type="project" value="TreeGrafter"/>
</dbReference>
<dbReference type="GO" id="GO:0060698">
    <property type="term" value="F:endoribonuclease inhibitor activity"/>
    <property type="evidence" value="ECO:0007669"/>
    <property type="project" value="UniProtKB-UniRule"/>
</dbReference>
<dbReference type="GO" id="GO:0019899">
    <property type="term" value="F:enzyme binding"/>
    <property type="evidence" value="ECO:0007669"/>
    <property type="project" value="UniProtKB-UniRule"/>
</dbReference>
<dbReference type="GO" id="GO:1902369">
    <property type="term" value="P:negative regulation of RNA catabolic process"/>
    <property type="evidence" value="ECO:0007669"/>
    <property type="project" value="TreeGrafter"/>
</dbReference>
<dbReference type="CDD" id="cd16841">
    <property type="entry name" value="RraA_family"/>
    <property type="match status" value="1"/>
</dbReference>
<dbReference type="FunFam" id="3.50.30.40:FF:000001">
    <property type="entry name" value="Regulator of ribonuclease activity A"/>
    <property type="match status" value="1"/>
</dbReference>
<dbReference type="Gene3D" id="3.50.30.40">
    <property type="entry name" value="Ribonuclease E inhibitor RraA/RraA-like"/>
    <property type="match status" value="1"/>
</dbReference>
<dbReference type="HAMAP" id="MF_00471">
    <property type="entry name" value="RraA"/>
    <property type="match status" value="1"/>
</dbReference>
<dbReference type="InterPro" id="IPR010203">
    <property type="entry name" value="RraA"/>
</dbReference>
<dbReference type="InterPro" id="IPR005493">
    <property type="entry name" value="RraA/RraA-like"/>
</dbReference>
<dbReference type="InterPro" id="IPR036704">
    <property type="entry name" value="RraA/RraA-like_sf"/>
</dbReference>
<dbReference type="InterPro" id="IPR014339">
    <property type="entry name" value="RraA_gpbac"/>
</dbReference>
<dbReference type="NCBIfam" id="TIGR01935">
    <property type="entry name" value="NOT-MenG"/>
    <property type="match status" value="1"/>
</dbReference>
<dbReference type="NCBIfam" id="NF006875">
    <property type="entry name" value="PRK09372.1"/>
    <property type="match status" value="1"/>
</dbReference>
<dbReference type="NCBIfam" id="TIGR02998">
    <property type="entry name" value="RraA_entero"/>
    <property type="match status" value="1"/>
</dbReference>
<dbReference type="PANTHER" id="PTHR33254">
    <property type="entry name" value="4-HYDROXY-4-METHYL-2-OXOGLUTARATE ALDOLASE 3-RELATED"/>
    <property type="match status" value="1"/>
</dbReference>
<dbReference type="PANTHER" id="PTHR33254:SF29">
    <property type="entry name" value="REGULATOR OF RIBONUCLEASE ACTIVITY A"/>
    <property type="match status" value="1"/>
</dbReference>
<dbReference type="Pfam" id="PF03737">
    <property type="entry name" value="RraA-like"/>
    <property type="match status" value="1"/>
</dbReference>
<dbReference type="SUPFAM" id="SSF89562">
    <property type="entry name" value="RraA-like"/>
    <property type="match status" value="1"/>
</dbReference>
<feature type="chain" id="PRO_1000194859" description="Regulator of ribonuclease activity A">
    <location>
        <begin position="1"/>
        <end position="161"/>
    </location>
</feature>
<organism>
    <name type="scientific">Escherichia coli O45:K1 (strain S88 / ExPEC)</name>
    <dbReference type="NCBI Taxonomy" id="585035"/>
    <lineage>
        <taxon>Bacteria</taxon>
        <taxon>Pseudomonadati</taxon>
        <taxon>Pseudomonadota</taxon>
        <taxon>Gammaproteobacteria</taxon>
        <taxon>Enterobacterales</taxon>
        <taxon>Enterobacteriaceae</taxon>
        <taxon>Escherichia</taxon>
    </lineage>
</organism>
<comment type="function">
    <text evidence="1">Globally modulates RNA abundance by binding to RNase E (Rne) and regulating its endonucleolytic activity. Can modulate Rne action in a substrate-dependent manner by altering the composition of the degradosome. Modulates RNA-binding and helicase activities of the degradosome.</text>
</comment>
<comment type="subunit">
    <text evidence="1">Homotrimer. Binds to both RNA-binding sites in the C-terminal region of Rne and to RhlB.</text>
</comment>
<comment type="subcellular location">
    <subcellularLocation>
        <location evidence="1">Cytoplasm</location>
    </subcellularLocation>
</comment>
<comment type="similarity">
    <text evidence="1">Belongs to the RraA family.</text>
</comment>
<gene>
    <name evidence="1" type="primary">rraA</name>
    <name type="ordered locus">ECS88_4379</name>
</gene>
<proteinExistence type="inferred from homology"/>
<evidence type="ECO:0000255" key="1">
    <source>
        <dbReference type="HAMAP-Rule" id="MF_00471"/>
    </source>
</evidence>